<gene>
    <name type="primary">urf-LM</name>
    <name type="ORF">NCU16002</name>
</gene>
<geneLocation type="mitochondrion"/>
<evidence type="ECO:0000255" key="1"/>
<evidence type="ECO:0000305" key="2"/>
<comment type="subcellular location">
    <subcellularLocation>
        <location evidence="2">Mitochondrion membrane</location>
        <topology evidence="2">Multi-pass membrane protein</topology>
    </subcellularLocation>
</comment>
<comment type="sequence caution" evidence="2">
    <conflict type="erroneous gene model prediction">
        <sequence resource="EMBL-CDS" id="CAA31720"/>
    </conflict>
</comment>
<comment type="sequence caution" evidence="2">
    <conflict type="erroneous gene model prediction">
        <sequence resource="EMBL-CDS" id="CAA31721"/>
    </conflict>
</comment>
<dbReference type="EMBL" id="X13337">
    <property type="protein sequence ID" value="CAA31720.1"/>
    <property type="status" value="ALT_SEQ"/>
    <property type="molecule type" value="Genomic_DNA"/>
</dbReference>
<dbReference type="EMBL" id="X13337">
    <property type="protein sequence ID" value="CAA31721.1"/>
    <property type="status" value="ALT_SEQ"/>
    <property type="molecule type" value="Genomic_DNA"/>
</dbReference>
<dbReference type="EMBL" id="KC683708">
    <property type="protein sequence ID" value="AGG15991.1"/>
    <property type="molecule type" value="Genomic_DNA"/>
</dbReference>
<dbReference type="PIR" id="S04556">
    <property type="entry name" value="S04556"/>
</dbReference>
<dbReference type="PIR" id="S04557">
    <property type="entry name" value="S04557"/>
</dbReference>
<dbReference type="RefSeq" id="YP_009126703.1">
    <property type="nucleotide sequence ID" value="NC_026614.1"/>
</dbReference>
<dbReference type="SMR" id="Q35138"/>
<dbReference type="STRING" id="367110.Q35138"/>
<dbReference type="EnsemblFungi" id="AGG15991">
    <property type="protein sequence ID" value="AGG15991"/>
    <property type="gene ID" value="NCU16002"/>
</dbReference>
<dbReference type="GeneID" id="23681529"/>
<dbReference type="KEGG" id="ncr:NCU16002"/>
<dbReference type="VEuPathDB" id="FungiDB:NCU16002"/>
<dbReference type="InParanoid" id="Q35138"/>
<dbReference type="Proteomes" id="UP000001805">
    <property type="component" value="Mitochondrion"/>
</dbReference>
<dbReference type="GO" id="GO:0031966">
    <property type="term" value="C:mitochondrial membrane"/>
    <property type="evidence" value="ECO:0007669"/>
    <property type="project" value="UniProtKB-SubCell"/>
</dbReference>
<accession>Q35138</accession>
<accession>M1RFQ6</accession>
<accession>Q35139</accession>
<feature type="chain" id="PRO_0000414737" description="Uncharacterized mitochondrial protein urf-LM">
    <location>
        <begin position="1"/>
        <end position="323"/>
    </location>
</feature>
<feature type="transmembrane region" description="Helical" evidence="1">
    <location>
        <begin position="8"/>
        <end position="28"/>
    </location>
</feature>
<feature type="transmembrane region" description="Helical" evidence="1">
    <location>
        <begin position="32"/>
        <end position="52"/>
    </location>
</feature>
<feature type="transmembrane region" description="Helical" evidence="1">
    <location>
        <begin position="92"/>
        <end position="112"/>
    </location>
</feature>
<feature type="sequence conflict" description="In Ref. 1; CAA31721." evidence="2" ref="1">
    <original>F</original>
    <variation>I</variation>
    <location>
        <position position="265"/>
    </location>
</feature>
<keyword id="KW-0472">Membrane</keyword>
<keyword id="KW-0496">Mitochondrion</keyword>
<keyword id="KW-1185">Reference proteome</keyword>
<keyword id="KW-0812">Transmembrane</keyword>
<keyword id="KW-1133">Transmembrane helix</keyword>
<reference key="1">
    <citation type="journal article" date="1989" name="Curr. Genet.">
        <title>Duplication of tRNA-met (m) and tRNA-cys genes and of fragments of a gene encoding a subunit of the NADH dehydrogenase complex in neurospora grassa mitochondrial DNA.</title>
        <authorList>
            <person name="Agsteribbe E."/>
            <person name="Hartog M."/>
            <person name="de Vries H."/>
        </authorList>
    </citation>
    <scope>NUCLEOTIDE SEQUENCE [GENOMIC DNA]</scope>
    <source>
        <strain>ATCC 24698 / 74-OR23-1A / CBS 708.71 / DSM 1257 / FGSC 987</strain>
    </source>
</reference>
<reference key="2">
    <citation type="journal article" date="2003" name="Nature">
        <title>The genome sequence of the filamentous fungus Neurospora crassa.</title>
        <authorList>
            <person name="Galagan J.E."/>
            <person name="Calvo S.E."/>
            <person name="Borkovich K.A."/>
            <person name="Selker E.U."/>
            <person name="Read N.D."/>
            <person name="Jaffe D.B."/>
            <person name="FitzHugh W."/>
            <person name="Ma L.-J."/>
            <person name="Smirnov S."/>
            <person name="Purcell S."/>
            <person name="Rehman B."/>
            <person name="Elkins T."/>
            <person name="Engels R."/>
            <person name="Wang S."/>
            <person name="Nielsen C.B."/>
            <person name="Butler J."/>
            <person name="Endrizzi M."/>
            <person name="Qui D."/>
            <person name="Ianakiev P."/>
            <person name="Bell-Pedersen D."/>
            <person name="Nelson M.A."/>
            <person name="Werner-Washburne M."/>
            <person name="Selitrennikoff C.P."/>
            <person name="Kinsey J.A."/>
            <person name="Braun E.L."/>
            <person name="Zelter A."/>
            <person name="Schulte U."/>
            <person name="Kothe G.O."/>
            <person name="Jedd G."/>
            <person name="Mewes H.-W."/>
            <person name="Staben C."/>
            <person name="Marcotte E."/>
            <person name="Greenberg D."/>
            <person name="Roy A."/>
            <person name="Foley K."/>
            <person name="Naylor J."/>
            <person name="Stange-Thomann N."/>
            <person name="Barrett R."/>
            <person name="Gnerre S."/>
            <person name="Kamal M."/>
            <person name="Kamvysselis M."/>
            <person name="Mauceli E.W."/>
            <person name="Bielke C."/>
            <person name="Rudd S."/>
            <person name="Frishman D."/>
            <person name="Krystofova S."/>
            <person name="Rasmussen C."/>
            <person name="Metzenberg R.L."/>
            <person name="Perkins D.D."/>
            <person name="Kroken S."/>
            <person name="Cogoni C."/>
            <person name="Macino G."/>
            <person name="Catcheside D.E.A."/>
            <person name="Li W."/>
            <person name="Pratt R.J."/>
            <person name="Osmani S.A."/>
            <person name="DeSouza C.P.C."/>
            <person name="Glass N.L."/>
            <person name="Orbach M.J."/>
            <person name="Berglund J.A."/>
            <person name="Voelker R."/>
            <person name="Yarden O."/>
            <person name="Plamann M."/>
            <person name="Seiler S."/>
            <person name="Dunlap J.C."/>
            <person name="Radford A."/>
            <person name="Aramayo R."/>
            <person name="Natvig D.O."/>
            <person name="Alex L.A."/>
            <person name="Mannhaupt G."/>
            <person name="Ebbole D.J."/>
            <person name="Freitag M."/>
            <person name="Paulsen I."/>
            <person name="Sachs M.S."/>
            <person name="Lander E.S."/>
            <person name="Nusbaum C."/>
            <person name="Birren B.W."/>
        </authorList>
    </citation>
    <scope>NUCLEOTIDE SEQUENCE [LARGE SCALE GENOMIC DNA]</scope>
    <source>
        <strain>ATCC 24698 / 74-OR23-1A / CBS 708.71 / DSM 1257 / FGSC 987</strain>
    </source>
</reference>
<reference key="3">
    <citation type="book" date="2004" name="The Mycota II, Genetics and Biotechnology (2nd edition)">
        <title>Mitochondrial genetics of Neurospora.</title>
        <editorList>
            <person name="Kueck U."/>
        </editorList>
        <authorList>
            <person name="Kennell J.C."/>
            <person name="Collins R.A."/>
            <person name="Griffiths A.J.F."/>
            <person name="Nargang F.E."/>
        </authorList>
    </citation>
    <scope>GENOME REANNOTATION</scope>
    <source>
        <strain>ATCC 24698 / 74-OR23-1A / CBS 708.71 / DSM 1257 / FGSC 987</strain>
    </source>
</reference>
<protein>
    <recommendedName>
        <fullName>Uncharacterized mitochondrial protein urf-LM</fullName>
    </recommendedName>
</protein>
<proteinExistence type="predicted"/>
<organism>
    <name type="scientific">Neurospora crassa (strain ATCC 24698 / 74-OR23-1A / CBS 708.71 / DSM 1257 / FGSC 987)</name>
    <dbReference type="NCBI Taxonomy" id="367110"/>
    <lineage>
        <taxon>Eukaryota</taxon>
        <taxon>Fungi</taxon>
        <taxon>Dikarya</taxon>
        <taxon>Ascomycota</taxon>
        <taxon>Pezizomycotina</taxon>
        <taxon>Sordariomycetes</taxon>
        <taxon>Sordariomycetidae</taxon>
        <taxon>Sordariales</taxon>
        <taxon>Sordariaceae</taxon>
        <taxon>Neurospora</taxon>
    </lineage>
</organism>
<name>URFLM_NEUCR</name>
<sequence>MIKKVNNFLVIILVFLAVILTELIMFMELNSLTLLKCFIFVDLLLVFIPFSLPRMGGKVSSIKNLIDAIKTRIFFFNSCLFFSKIWLYENKITIFWVYTIWNGLNSIFCGIFMEDNYMADIYSISPKNGGGDPAEGNTPSGNPDSTISYDFLAEARDRINTHKSEISTPTEGDKAILFSKDIPTYGQKKIYFQESSGLLSRRGLAPLSVREICDTLLTDKGLPPLNTVGLKSHLNTVDQNIVLYKEQVVKFNNTLRGIDQGNEPFFPDSSKKLFLEYKEILPHMVEINEKMGTNLCKEIKAKDPSFHHPLLTNNDSTSKPKEK</sequence>